<accession>Q7UI03</accession>
<feature type="chain" id="PRO_0000125720" description="Large ribosomal subunit protein uL1">
    <location>
        <begin position="1"/>
        <end position="225"/>
    </location>
</feature>
<organism>
    <name type="scientific">Rhodopirellula baltica (strain DSM 10527 / NCIMB 13988 / SH1)</name>
    <dbReference type="NCBI Taxonomy" id="243090"/>
    <lineage>
        <taxon>Bacteria</taxon>
        <taxon>Pseudomonadati</taxon>
        <taxon>Planctomycetota</taxon>
        <taxon>Planctomycetia</taxon>
        <taxon>Pirellulales</taxon>
        <taxon>Pirellulaceae</taxon>
        <taxon>Rhodopirellula</taxon>
    </lineage>
</organism>
<gene>
    <name evidence="1" type="primary">rplA</name>
    <name type="ordered locus">RB12839</name>
</gene>
<keyword id="KW-1185">Reference proteome</keyword>
<keyword id="KW-0678">Repressor</keyword>
<keyword id="KW-0687">Ribonucleoprotein</keyword>
<keyword id="KW-0689">Ribosomal protein</keyword>
<keyword id="KW-0694">RNA-binding</keyword>
<keyword id="KW-0699">rRNA-binding</keyword>
<keyword id="KW-0810">Translation regulation</keyword>
<keyword id="KW-0820">tRNA-binding</keyword>
<reference key="1">
    <citation type="journal article" date="2003" name="Proc. Natl. Acad. Sci. U.S.A.">
        <title>Complete genome sequence of the marine planctomycete Pirellula sp. strain 1.</title>
        <authorList>
            <person name="Gloeckner F.O."/>
            <person name="Kube M."/>
            <person name="Bauer M."/>
            <person name="Teeling H."/>
            <person name="Lombardot T."/>
            <person name="Ludwig W."/>
            <person name="Gade D."/>
            <person name="Beck A."/>
            <person name="Borzym K."/>
            <person name="Heitmann K."/>
            <person name="Rabus R."/>
            <person name="Schlesner H."/>
            <person name="Amann R."/>
            <person name="Reinhardt R."/>
        </authorList>
    </citation>
    <scope>NUCLEOTIDE SEQUENCE [LARGE SCALE GENOMIC DNA]</scope>
    <source>
        <strain>DSM 10527 / NCIMB 13988 / SH1</strain>
    </source>
</reference>
<name>RL1_RHOBA</name>
<proteinExistence type="inferred from homology"/>
<comment type="function">
    <text evidence="1">Binds directly to 23S rRNA. The L1 stalk is quite mobile in the ribosome, and is involved in E site tRNA release.</text>
</comment>
<comment type="function">
    <text evidence="1">Protein L1 is also a translational repressor protein, it controls the translation of the L11 operon by binding to its mRNA.</text>
</comment>
<comment type="subunit">
    <text evidence="1">Part of the 50S ribosomal subunit.</text>
</comment>
<comment type="similarity">
    <text evidence="1">Belongs to the universal ribosomal protein uL1 family.</text>
</comment>
<sequence length="225" mass="24159">MGKKSKRYRAALEKQPKEMLPLGKAVEVLKTYDATKFDQTVEVHMRLGVDPNQADQIIRGSLVLPHGIGKTQRVIVFAKGDAAKAAEEAGADEVGQEDLAKKIKDGWTDFDVCIAAPDMMGLVGPLGRVLGPRGLMPSPRAGTVTPDVGKVVSEYKAGKVEFRNDKGGNVHAMVGKMSFEANKLEENIASFVDFISAMKPQSIKGTYIKGVAICATMTPSVRVAT</sequence>
<dbReference type="EMBL" id="BX294155">
    <property type="protein sequence ID" value="CAD77812.1"/>
    <property type="molecule type" value="Genomic_DNA"/>
</dbReference>
<dbReference type="RefSeq" id="NP_870735.1">
    <property type="nucleotide sequence ID" value="NC_005027.1"/>
</dbReference>
<dbReference type="RefSeq" id="WP_007324457.1">
    <property type="nucleotide sequence ID" value="NC_005027.1"/>
</dbReference>
<dbReference type="SMR" id="Q7UI03"/>
<dbReference type="FunCoup" id="Q7UI03">
    <property type="interactions" value="617"/>
</dbReference>
<dbReference type="STRING" id="243090.RB12839"/>
<dbReference type="EnsemblBacteria" id="CAD77812">
    <property type="protein sequence ID" value="CAD77812"/>
    <property type="gene ID" value="RB12839"/>
</dbReference>
<dbReference type="KEGG" id="rba:RB12839"/>
<dbReference type="PATRIC" id="fig|243090.15.peg.6219"/>
<dbReference type="eggNOG" id="COG0081">
    <property type="taxonomic scope" value="Bacteria"/>
</dbReference>
<dbReference type="HOGENOM" id="CLU_062853_0_0_0"/>
<dbReference type="InParanoid" id="Q7UI03"/>
<dbReference type="OrthoDB" id="9803740at2"/>
<dbReference type="Proteomes" id="UP000001025">
    <property type="component" value="Chromosome"/>
</dbReference>
<dbReference type="GO" id="GO:0015934">
    <property type="term" value="C:large ribosomal subunit"/>
    <property type="evidence" value="ECO:0007669"/>
    <property type="project" value="InterPro"/>
</dbReference>
<dbReference type="GO" id="GO:0019843">
    <property type="term" value="F:rRNA binding"/>
    <property type="evidence" value="ECO:0007669"/>
    <property type="project" value="UniProtKB-UniRule"/>
</dbReference>
<dbReference type="GO" id="GO:0003735">
    <property type="term" value="F:structural constituent of ribosome"/>
    <property type="evidence" value="ECO:0007669"/>
    <property type="project" value="InterPro"/>
</dbReference>
<dbReference type="GO" id="GO:0000049">
    <property type="term" value="F:tRNA binding"/>
    <property type="evidence" value="ECO:0007669"/>
    <property type="project" value="UniProtKB-KW"/>
</dbReference>
<dbReference type="GO" id="GO:0006417">
    <property type="term" value="P:regulation of translation"/>
    <property type="evidence" value="ECO:0007669"/>
    <property type="project" value="UniProtKB-KW"/>
</dbReference>
<dbReference type="GO" id="GO:0006412">
    <property type="term" value="P:translation"/>
    <property type="evidence" value="ECO:0007669"/>
    <property type="project" value="UniProtKB-UniRule"/>
</dbReference>
<dbReference type="CDD" id="cd00403">
    <property type="entry name" value="Ribosomal_L1"/>
    <property type="match status" value="1"/>
</dbReference>
<dbReference type="FunFam" id="3.40.50.790:FF:000001">
    <property type="entry name" value="50S ribosomal protein L1"/>
    <property type="match status" value="1"/>
</dbReference>
<dbReference type="Gene3D" id="3.30.190.20">
    <property type="match status" value="1"/>
</dbReference>
<dbReference type="Gene3D" id="3.40.50.790">
    <property type="match status" value="1"/>
</dbReference>
<dbReference type="HAMAP" id="MF_01318_B">
    <property type="entry name" value="Ribosomal_uL1_B"/>
    <property type="match status" value="1"/>
</dbReference>
<dbReference type="InterPro" id="IPR005878">
    <property type="entry name" value="Ribosom_uL1_bac-type"/>
</dbReference>
<dbReference type="InterPro" id="IPR002143">
    <property type="entry name" value="Ribosomal_uL1"/>
</dbReference>
<dbReference type="InterPro" id="IPR023674">
    <property type="entry name" value="Ribosomal_uL1-like"/>
</dbReference>
<dbReference type="InterPro" id="IPR028364">
    <property type="entry name" value="Ribosomal_uL1/biogenesis"/>
</dbReference>
<dbReference type="InterPro" id="IPR016095">
    <property type="entry name" value="Ribosomal_uL1_3-a/b-sand"/>
</dbReference>
<dbReference type="InterPro" id="IPR023673">
    <property type="entry name" value="Ribosomal_uL1_CS"/>
</dbReference>
<dbReference type="NCBIfam" id="TIGR01169">
    <property type="entry name" value="rplA_bact"/>
    <property type="match status" value="1"/>
</dbReference>
<dbReference type="PANTHER" id="PTHR36427">
    <property type="entry name" value="54S RIBOSOMAL PROTEIN L1, MITOCHONDRIAL"/>
    <property type="match status" value="1"/>
</dbReference>
<dbReference type="PANTHER" id="PTHR36427:SF3">
    <property type="entry name" value="LARGE RIBOSOMAL SUBUNIT PROTEIN UL1M"/>
    <property type="match status" value="1"/>
</dbReference>
<dbReference type="Pfam" id="PF00687">
    <property type="entry name" value="Ribosomal_L1"/>
    <property type="match status" value="1"/>
</dbReference>
<dbReference type="PIRSF" id="PIRSF002155">
    <property type="entry name" value="Ribosomal_L1"/>
    <property type="match status" value="1"/>
</dbReference>
<dbReference type="SUPFAM" id="SSF56808">
    <property type="entry name" value="Ribosomal protein L1"/>
    <property type="match status" value="1"/>
</dbReference>
<dbReference type="PROSITE" id="PS01199">
    <property type="entry name" value="RIBOSOMAL_L1"/>
    <property type="match status" value="1"/>
</dbReference>
<protein>
    <recommendedName>
        <fullName evidence="1">Large ribosomal subunit protein uL1</fullName>
    </recommendedName>
    <alternativeName>
        <fullName evidence="2">50S ribosomal protein L1</fullName>
    </alternativeName>
</protein>
<evidence type="ECO:0000255" key="1">
    <source>
        <dbReference type="HAMAP-Rule" id="MF_01318"/>
    </source>
</evidence>
<evidence type="ECO:0000305" key="2"/>